<protein>
    <recommendedName>
        <fullName>F-box protein At5g41720</fullName>
    </recommendedName>
</protein>
<accession>Q6NLE0</accession>
<accession>Q9FFQ9</accession>
<evidence type="ECO:0000305" key="1"/>
<feature type="chain" id="PRO_0000283545" description="F-box protein At5g41720">
    <location>
        <begin position="1"/>
        <end position="187"/>
    </location>
</feature>
<feature type="domain" description="F-box">
    <location>
        <begin position="2"/>
        <end position="49"/>
    </location>
</feature>
<gene>
    <name type="ordered locus">At5g41720</name>
    <name type="ORF">MBK23.26</name>
</gene>
<name>FB279_ARATH</name>
<comment type="sequence caution" evidence="1">
    <conflict type="erroneous initiation">
        <sequence resource="EMBL-CDS" id="BAB11478"/>
    </conflict>
</comment>
<sequence length="187" mass="21855">MMMNSPLDYDVLLEIMSYCPATEMAKFRLLSKECNKRSYEMSFINRHLHRTNSFLGYIFYYKDNKWFRNHSCFVSGVDEKDKNRINLAFLPPLCNVSIEACDTHHGILLCVDVVFKGRQKIPDYIVCKPATKQYRIIPNPKTRFGTVATGLMVISSNPFRYKIIRVSDTWARVGRDGVYNLRESLFE</sequence>
<reference key="1">
    <citation type="journal article" date="1997" name="DNA Res.">
        <title>Structural analysis of Arabidopsis thaliana chromosome 5. I. Sequence features of the 1.6 Mb regions covered by twenty physically assigned P1 clones.</title>
        <authorList>
            <person name="Sato S."/>
            <person name="Kotani H."/>
            <person name="Nakamura Y."/>
            <person name="Kaneko T."/>
            <person name="Asamizu E."/>
            <person name="Fukami M."/>
            <person name="Miyajima N."/>
            <person name="Tabata S."/>
        </authorList>
    </citation>
    <scope>NUCLEOTIDE SEQUENCE [LARGE SCALE GENOMIC DNA]</scope>
    <source>
        <strain>cv. Columbia</strain>
    </source>
</reference>
<reference key="2">
    <citation type="journal article" date="2017" name="Plant J.">
        <title>Araport11: a complete reannotation of the Arabidopsis thaliana reference genome.</title>
        <authorList>
            <person name="Cheng C.Y."/>
            <person name="Krishnakumar V."/>
            <person name="Chan A.P."/>
            <person name="Thibaud-Nissen F."/>
            <person name="Schobel S."/>
            <person name="Town C.D."/>
        </authorList>
    </citation>
    <scope>GENOME REANNOTATION</scope>
    <source>
        <strain>cv. Columbia</strain>
    </source>
</reference>
<reference key="3">
    <citation type="submission" date="2004-04" db="EMBL/GenBank/DDBJ databases">
        <title>Arabidopsis ORF clones.</title>
        <authorList>
            <person name="Shinn P."/>
            <person name="Chen H."/>
            <person name="Cheuk R.F."/>
            <person name="Kim C.J."/>
            <person name="Ecker J.R."/>
        </authorList>
    </citation>
    <scope>NUCLEOTIDE SEQUENCE [LARGE SCALE MRNA]</scope>
    <source>
        <strain>cv. Columbia</strain>
    </source>
</reference>
<dbReference type="EMBL" id="AB005233">
    <property type="protein sequence ID" value="BAB11478.1"/>
    <property type="status" value="ALT_INIT"/>
    <property type="molecule type" value="Genomic_DNA"/>
</dbReference>
<dbReference type="EMBL" id="CP002688">
    <property type="protein sequence ID" value="AED94716.1"/>
    <property type="molecule type" value="Genomic_DNA"/>
</dbReference>
<dbReference type="EMBL" id="BT012208">
    <property type="protein sequence ID" value="AAS76695.1"/>
    <property type="molecule type" value="mRNA"/>
</dbReference>
<dbReference type="EMBL" id="BT012394">
    <property type="protein sequence ID" value="AAS88784.1"/>
    <property type="molecule type" value="mRNA"/>
</dbReference>
<dbReference type="RefSeq" id="NP_198987.2">
    <property type="nucleotide sequence ID" value="NM_123537.3"/>
</dbReference>
<dbReference type="STRING" id="3702.Q6NLE0"/>
<dbReference type="PaxDb" id="3702-AT5G41720.1"/>
<dbReference type="EnsemblPlants" id="AT5G41720.1">
    <property type="protein sequence ID" value="AT5G41720.1"/>
    <property type="gene ID" value="AT5G41720"/>
</dbReference>
<dbReference type="GeneID" id="834175"/>
<dbReference type="Gramene" id="AT5G41720.1">
    <property type="protein sequence ID" value="AT5G41720.1"/>
    <property type="gene ID" value="AT5G41720"/>
</dbReference>
<dbReference type="KEGG" id="ath:AT5G41720"/>
<dbReference type="Araport" id="AT5G41720"/>
<dbReference type="TAIR" id="AT5G41720"/>
<dbReference type="HOGENOM" id="CLU_1449569_0_0_1"/>
<dbReference type="InParanoid" id="Q6NLE0"/>
<dbReference type="OMA" id="RSYEMSF"/>
<dbReference type="PhylomeDB" id="Q6NLE0"/>
<dbReference type="PRO" id="PR:Q6NLE0"/>
<dbReference type="Proteomes" id="UP000006548">
    <property type="component" value="Chromosome 5"/>
</dbReference>
<dbReference type="ExpressionAtlas" id="Q6NLE0">
    <property type="expression patterns" value="baseline and differential"/>
</dbReference>
<dbReference type="InterPro" id="IPR036047">
    <property type="entry name" value="F-box-like_dom_sf"/>
</dbReference>
<dbReference type="InterPro" id="IPR001810">
    <property type="entry name" value="F-box_dom"/>
</dbReference>
<dbReference type="InterPro" id="IPR050796">
    <property type="entry name" value="SCF_F-box_component"/>
</dbReference>
<dbReference type="PANTHER" id="PTHR31672">
    <property type="entry name" value="BNACNNG10540D PROTEIN"/>
    <property type="match status" value="1"/>
</dbReference>
<dbReference type="Pfam" id="PF00646">
    <property type="entry name" value="F-box"/>
    <property type="match status" value="1"/>
</dbReference>
<dbReference type="SUPFAM" id="SSF81383">
    <property type="entry name" value="F-box domain"/>
    <property type="match status" value="1"/>
</dbReference>
<proteinExistence type="evidence at transcript level"/>
<keyword id="KW-1185">Reference proteome</keyword>
<organism>
    <name type="scientific">Arabidopsis thaliana</name>
    <name type="common">Mouse-ear cress</name>
    <dbReference type="NCBI Taxonomy" id="3702"/>
    <lineage>
        <taxon>Eukaryota</taxon>
        <taxon>Viridiplantae</taxon>
        <taxon>Streptophyta</taxon>
        <taxon>Embryophyta</taxon>
        <taxon>Tracheophyta</taxon>
        <taxon>Spermatophyta</taxon>
        <taxon>Magnoliopsida</taxon>
        <taxon>eudicotyledons</taxon>
        <taxon>Gunneridae</taxon>
        <taxon>Pentapetalae</taxon>
        <taxon>rosids</taxon>
        <taxon>malvids</taxon>
        <taxon>Brassicales</taxon>
        <taxon>Brassicaceae</taxon>
        <taxon>Camelineae</taxon>
        <taxon>Arabidopsis</taxon>
    </lineage>
</organism>